<comment type="function">
    <text evidence="1">Involved in the gluconeogenesis. Catalyzes stereospecifically the conversion of dihydroxyacetone phosphate (DHAP) to D-glyceraldehyde-3-phosphate (G3P).</text>
</comment>
<comment type="catalytic activity">
    <reaction evidence="1">
        <text>D-glyceraldehyde 3-phosphate = dihydroxyacetone phosphate</text>
        <dbReference type="Rhea" id="RHEA:18585"/>
        <dbReference type="ChEBI" id="CHEBI:57642"/>
        <dbReference type="ChEBI" id="CHEBI:59776"/>
        <dbReference type="EC" id="5.3.1.1"/>
    </reaction>
</comment>
<comment type="pathway">
    <text evidence="1">Carbohydrate biosynthesis; gluconeogenesis.</text>
</comment>
<comment type="pathway">
    <text evidence="1">Carbohydrate degradation; glycolysis; D-glyceraldehyde 3-phosphate from glycerone phosphate: step 1/1.</text>
</comment>
<comment type="subunit">
    <text evidence="1">Homodimer.</text>
</comment>
<comment type="subcellular location">
    <subcellularLocation>
        <location evidence="1">Cytoplasm</location>
    </subcellularLocation>
</comment>
<comment type="similarity">
    <text evidence="1">Belongs to the triosephosphate isomerase family.</text>
</comment>
<feature type="chain" id="PRO_1000076633" description="Triosephosphate isomerase">
    <location>
        <begin position="1"/>
        <end position="253"/>
    </location>
</feature>
<feature type="active site" description="Electrophile" evidence="1">
    <location>
        <position position="91"/>
    </location>
</feature>
<feature type="active site" description="Proton acceptor" evidence="1">
    <location>
        <position position="168"/>
    </location>
</feature>
<feature type="binding site" evidence="1">
    <location>
        <begin position="8"/>
        <end position="10"/>
    </location>
    <ligand>
        <name>substrate</name>
    </ligand>
</feature>
<feature type="binding site" evidence="1">
    <location>
        <position position="174"/>
    </location>
    <ligand>
        <name>substrate</name>
    </ligand>
</feature>
<feature type="binding site" evidence="1">
    <location>
        <position position="213"/>
    </location>
    <ligand>
        <name>substrate</name>
    </ligand>
</feature>
<feature type="binding site" evidence="1">
    <location>
        <begin position="234"/>
        <end position="235"/>
    </location>
    <ligand>
        <name>substrate</name>
    </ligand>
</feature>
<dbReference type="EC" id="5.3.1.1" evidence="1"/>
<dbReference type="EMBL" id="CP000697">
    <property type="protein sequence ID" value="ABQ30447.1"/>
    <property type="molecule type" value="Genomic_DNA"/>
</dbReference>
<dbReference type="RefSeq" id="WP_011942092.1">
    <property type="nucleotide sequence ID" value="NC_009484.1"/>
</dbReference>
<dbReference type="SMR" id="A5FXW5"/>
<dbReference type="STRING" id="349163.Acry_1236"/>
<dbReference type="KEGG" id="acr:Acry_1236"/>
<dbReference type="eggNOG" id="COG0149">
    <property type="taxonomic scope" value="Bacteria"/>
</dbReference>
<dbReference type="HOGENOM" id="CLU_024251_2_1_5"/>
<dbReference type="UniPathway" id="UPA00109">
    <property type="reaction ID" value="UER00189"/>
</dbReference>
<dbReference type="UniPathway" id="UPA00138"/>
<dbReference type="Proteomes" id="UP000000245">
    <property type="component" value="Chromosome"/>
</dbReference>
<dbReference type="GO" id="GO:0005829">
    <property type="term" value="C:cytosol"/>
    <property type="evidence" value="ECO:0007669"/>
    <property type="project" value="TreeGrafter"/>
</dbReference>
<dbReference type="GO" id="GO:0004807">
    <property type="term" value="F:triose-phosphate isomerase activity"/>
    <property type="evidence" value="ECO:0007669"/>
    <property type="project" value="UniProtKB-UniRule"/>
</dbReference>
<dbReference type="GO" id="GO:0006094">
    <property type="term" value="P:gluconeogenesis"/>
    <property type="evidence" value="ECO:0007669"/>
    <property type="project" value="UniProtKB-UniRule"/>
</dbReference>
<dbReference type="GO" id="GO:0046166">
    <property type="term" value="P:glyceraldehyde-3-phosphate biosynthetic process"/>
    <property type="evidence" value="ECO:0007669"/>
    <property type="project" value="TreeGrafter"/>
</dbReference>
<dbReference type="GO" id="GO:0019563">
    <property type="term" value="P:glycerol catabolic process"/>
    <property type="evidence" value="ECO:0007669"/>
    <property type="project" value="TreeGrafter"/>
</dbReference>
<dbReference type="GO" id="GO:0006096">
    <property type="term" value="P:glycolytic process"/>
    <property type="evidence" value="ECO:0007669"/>
    <property type="project" value="UniProtKB-UniRule"/>
</dbReference>
<dbReference type="CDD" id="cd00311">
    <property type="entry name" value="TIM"/>
    <property type="match status" value="1"/>
</dbReference>
<dbReference type="FunFam" id="3.20.20.70:FF:000016">
    <property type="entry name" value="Triosephosphate isomerase"/>
    <property type="match status" value="1"/>
</dbReference>
<dbReference type="Gene3D" id="3.20.20.70">
    <property type="entry name" value="Aldolase class I"/>
    <property type="match status" value="1"/>
</dbReference>
<dbReference type="HAMAP" id="MF_00147_B">
    <property type="entry name" value="TIM_B"/>
    <property type="match status" value="1"/>
</dbReference>
<dbReference type="InterPro" id="IPR013785">
    <property type="entry name" value="Aldolase_TIM"/>
</dbReference>
<dbReference type="InterPro" id="IPR035990">
    <property type="entry name" value="TIM_sf"/>
</dbReference>
<dbReference type="InterPro" id="IPR022896">
    <property type="entry name" value="TrioseP_Isoase_bac/euk"/>
</dbReference>
<dbReference type="InterPro" id="IPR000652">
    <property type="entry name" value="Triosephosphate_isomerase"/>
</dbReference>
<dbReference type="InterPro" id="IPR020861">
    <property type="entry name" value="Triosephosphate_isomerase_AS"/>
</dbReference>
<dbReference type="NCBIfam" id="TIGR00419">
    <property type="entry name" value="tim"/>
    <property type="match status" value="1"/>
</dbReference>
<dbReference type="PANTHER" id="PTHR21139">
    <property type="entry name" value="TRIOSEPHOSPHATE ISOMERASE"/>
    <property type="match status" value="1"/>
</dbReference>
<dbReference type="PANTHER" id="PTHR21139:SF42">
    <property type="entry name" value="TRIOSEPHOSPHATE ISOMERASE"/>
    <property type="match status" value="1"/>
</dbReference>
<dbReference type="Pfam" id="PF00121">
    <property type="entry name" value="TIM"/>
    <property type="match status" value="1"/>
</dbReference>
<dbReference type="SUPFAM" id="SSF51351">
    <property type="entry name" value="Triosephosphate isomerase (TIM)"/>
    <property type="match status" value="1"/>
</dbReference>
<dbReference type="PROSITE" id="PS00171">
    <property type="entry name" value="TIM_1"/>
    <property type="match status" value="1"/>
</dbReference>
<dbReference type="PROSITE" id="PS51440">
    <property type="entry name" value="TIM_2"/>
    <property type="match status" value="1"/>
</dbReference>
<accession>A5FXW5</accession>
<keyword id="KW-0963">Cytoplasm</keyword>
<keyword id="KW-0312">Gluconeogenesis</keyword>
<keyword id="KW-0324">Glycolysis</keyword>
<keyword id="KW-0413">Isomerase</keyword>
<keyword id="KW-1185">Reference proteome</keyword>
<reference key="1">
    <citation type="submission" date="2007-05" db="EMBL/GenBank/DDBJ databases">
        <title>Complete sequence of chromosome of Acidiphilium cryptum JF-5.</title>
        <authorList>
            <consortium name="US DOE Joint Genome Institute"/>
            <person name="Copeland A."/>
            <person name="Lucas S."/>
            <person name="Lapidus A."/>
            <person name="Barry K."/>
            <person name="Detter J.C."/>
            <person name="Glavina del Rio T."/>
            <person name="Hammon N."/>
            <person name="Israni S."/>
            <person name="Dalin E."/>
            <person name="Tice H."/>
            <person name="Pitluck S."/>
            <person name="Sims D."/>
            <person name="Brettin T."/>
            <person name="Bruce D."/>
            <person name="Han C."/>
            <person name="Schmutz J."/>
            <person name="Larimer F."/>
            <person name="Land M."/>
            <person name="Hauser L."/>
            <person name="Kyrpides N."/>
            <person name="Kim E."/>
            <person name="Magnuson T."/>
            <person name="Richardson P."/>
        </authorList>
    </citation>
    <scope>NUCLEOTIDE SEQUENCE [LARGE SCALE GENOMIC DNA]</scope>
    <source>
        <strain>JF-5</strain>
    </source>
</reference>
<name>TPIS_ACICJ</name>
<sequence length="253" mass="25333">MPQLIAGNWKMNGTLAGIAAYAAALRPASPGAELLVCPPAPLIAPLRAALDGAPVALGAQDCAVKRSGAHTGDLSADLLAELGATHVILGHSERRADHAESSATVREKARTAIAAGLVPIICVGETEAERDSGEAETVVRAQLAGSLPEELAGQTVPGVVAPGIIAYEPVWAIGTGRTPTEEDVAAMHASIRAALRRQLGAAGATMPILYGGSVKPSNAASLLALPEVGGALVGGASLKAEDFLAIASAAARD</sequence>
<gene>
    <name evidence="1" type="primary">tpiA</name>
    <name type="ordered locus">Acry_1236</name>
</gene>
<evidence type="ECO:0000255" key="1">
    <source>
        <dbReference type="HAMAP-Rule" id="MF_00147"/>
    </source>
</evidence>
<protein>
    <recommendedName>
        <fullName evidence="1">Triosephosphate isomerase</fullName>
        <shortName evidence="1">TIM</shortName>
        <shortName evidence="1">TPI</shortName>
        <ecNumber evidence="1">5.3.1.1</ecNumber>
    </recommendedName>
    <alternativeName>
        <fullName evidence="1">Triose-phosphate isomerase</fullName>
    </alternativeName>
</protein>
<organism>
    <name type="scientific">Acidiphilium cryptum (strain JF-5)</name>
    <dbReference type="NCBI Taxonomy" id="349163"/>
    <lineage>
        <taxon>Bacteria</taxon>
        <taxon>Pseudomonadati</taxon>
        <taxon>Pseudomonadota</taxon>
        <taxon>Alphaproteobacteria</taxon>
        <taxon>Acetobacterales</taxon>
        <taxon>Acidocellaceae</taxon>
        <taxon>Acidiphilium</taxon>
    </lineage>
</organism>
<proteinExistence type="inferred from homology"/>